<reference key="1">
    <citation type="journal article" date="1997" name="J. Bacteriol.">
        <title>Complete genome sequence of Methanobacterium thermoautotrophicum deltaH: functional analysis and comparative genomics.</title>
        <authorList>
            <person name="Smith D.R."/>
            <person name="Doucette-Stamm L.A."/>
            <person name="Deloughery C."/>
            <person name="Lee H.-M."/>
            <person name="Dubois J."/>
            <person name="Aldredge T."/>
            <person name="Bashirzadeh R."/>
            <person name="Blakely D."/>
            <person name="Cook R."/>
            <person name="Gilbert K."/>
            <person name="Harrison D."/>
            <person name="Hoang L."/>
            <person name="Keagle P."/>
            <person name="Lumm W."/>
            <person name="Pothier B."/>
            <person name="Qiu D."/>
            <person name="Spadafora R."/>
            <person name="Vicare R."/>
            <person name="Wang Y."/>
            <person name="Wierzbowski J."/>
            <person name="Gibson R."/>
            <person name="Jiwani N."/>
            <person name="Caruso A."/>
            <person name="Bush D."/>
            <person name="Safer H."/>
            <person name="Patwell D."/>
            <person name="Prabhakar S."/>
            <person name="McDougall S."/>
            <person name="Shimer G."/>
            <person name="Goyal A."/>
            <person name="Pietrovski S."/>
            <person name="Church G.M."/>
            <person name="Daniels C.J."/>
            <person name="Mao J.-I."/>
            <person name="Rice P."/>
            <person name="Noelling J."/>
            <person name="Reeve J.N."/>
        </authorList>
    </citation>
    <scope>NUCLEOTIDE SEQUENCE [LARGE SCALE GENOMIC DNA]</scope>
    <source>
        <strain>ATCC 29096 / DSM 1053 / JCM 10044 / NBRC 100330 / Delta H</strain>
    </source>
</reference>
<feature type="chain" id="PRO_0000140490" description="UPF0280 protein MTH_727">
    <location>
        <begin position="1"/>
        <end position="256"/>
    </location>
</feature>
<organism>
    <name type="scientific">Methanothermobacter thermautotrophicus (strain ATCC 29096 / DSM 1053 / JCM 10044 / NBRC 100330 / Delta H)</name>
    <name type="common">Methanobacterium thermoautotrophicum</name>
    <dbReference type="NCBI Taxonomy" id="187420"/>
    <lineage>
        <taxon>Archaea</taxon>
        <taxon>Methanobacteriati</taxon>
        <taxon>Methanobacteriota</taxon>
        <taxon>Methanomada group</taxon>
        <taxon>Methanobacteria</taxon>
        <taxon>Methanobacteriales</taxon>
        <taxon>Methanobacteriaceae</taxon>
        <taxon>Methanothermobacter</taxon>
    </lineage>
</organism>
<protein>
    <recommendedName>
        <fullName evidence="1">UPF0280 protein MTH_727</fullName>
    </recommendedName>
</protein>
<keyword id="KW-1185">Reference proteome</keyword>
<evidence type="ECO:0000255" key="1">
    <source>
        <dbReference type="HAMAP-Rule" id="MF_01079"/>
    </source>
</evidence>
<accession>O26823</accession>
<gene>
    <name type="ordered locus">MTH_727</name>
</gene>
<dbReference type="EMBL" id="AE000666">
    <property type="protein sequence ID" value="AAB85232.1"/>
    <property type="molecule type" value="Genomic_DNA"/>
</dbReference>
<dbReference type="PIR" id="B69197">
    <property type="entry name" value="B69197"/>
</dbReference>
<dbReference type="SMR" id="O26823"/>
<dbReference type="STRING" id="187420.MTH_727"/>
<dbReference type="PaxDb" id="187420-MTH_727"/>
<dbReference type="EnsemblBacteria" id="AAB85232">
    <property type="protein sequence ID" value="AAB85232"/>
    <property type="gene ID" value="MTH_727"/>
</dbReference>
<dbReference type="KEGG" id="mth:MTH_727"/>
<dbReference type="PATRIC" id="fig|187420.15.peg.713"/>
<dbReference type="HOGENOM" id="CLU_074757_0_0_2"/>
<dbReference type="InParanoid" id="O26823"/>
<dbReference type="Proteomes" id="UP000005223">
    <property type="component" value="Chromosome"/>
</dbReference>
<dbReference type="Gene3D" id="3.10.520.10">
    <property type="entry name" value="ApbE-like domains"/>
    <property type="match status" value="1"/>
</dbReference>
<dbReference type="HAMAP" id="MF_01079">
    <property type="entry name" value="UPF0280"/>
    <property type="match status" value="1"/>
</dbReference>
<dbReference type="InterPro" id="IPR003374">
    <property type="entry name" value="ApbE-like_sf"/>
</dbReference>
<dbReference type="InterPro" id="IPR037456">
    <property type="entry name" value="MA1715-like"/>
</dbReference>
<dbReference type="InterPro" id="IPR007183">
    <property type="entry name" value="UPF0280"/>
</dbReference>
<dbReference type="NCBIfam" id="NF003321">
    <property type="entry name" value="PRK04334.1-1"/>
    <property type="match status" value="1"/>
</dbReference>
<dbReference type="PIRSF" id="PIRSF006421">
    <property type="entry name" value="UCP006421"/>
    <property type="match status" value="1"/>
</dbReference>
<dbReference type="SUPFAM" id="SSF143631">
    <property type="entry name" value="ApbE-like"/>
    <property type="match status" value="1"/>
</dbReference>
<sequence length="256" mass="27294">MIPSDVSFNVLESWCGTMERIVIGETRINLRTELRNHGLSGFVLGERMKLMDYIRRNPEFLTSLEPIVVSEGPLIVRMMSRASRKAEVGPMASVAGTISQLSLMHLMGKGSRCSIIDNGGDIALVNNRKITVGLYAGSSSLSGTVGFLLKPGGPRGVCTSSGTVGHSISFGRADSVTVFASEASTADALATSIANSANGPDDISAVENALERADDFREHFRGVMVVVGEHAGTVGRIPRLVMTDRKAVLGDLWDEV</sequence>
<name>Y727_METTH</name>
<comment type="similarity">
    <text evidence="1">Belongs to the UPF0280 family.</text>
</comment>
<proteinExistence type="inferred from homology"/>